<reference key="1">
    <citation type="journal article" date="2004" name="Proc. Natl. Acad. Sci. U.S.A.">
        <title>Genomic plasticity of the causative agent of melioidosis, Burkholderia pseudomallei.</title>
        <authorList>
            <person name="Holden M.T.G."/>
            <person name="Titball R.W."/>
            <person name="Peacock S.J."/>
            <person name="Cerdeno-Tarraga A.-M."/>
            <person name="Atkins T."/>
            <person name="Crossman L.C."/>
            <person name="Pitt T."/>
            <person name="Churcher C."/>
            <person name="Mungall K.L."/>
            <person name="Bentley S.D."/>
            <person name="Sebaihia M."/>
            <person name="Thomson N.R."/>
            <person name="Bason N."/>
            <person name="Beacham I.R."/>
            <person name="Brooks K."/>
            <person name="Brown K.A."/>
            <person name="Brown N.F."/>
            <person name="Challis G.L."/>
            <person name="Cherevach I."/>
            <person name="Chillingworth T."/>
            <person name="Cronin A."/>
            <person name="Crossett B."/>
            <person name="Davis P."/>
            <person name="DeShazer D."/>
            <person name="Feltwell T."/>
            <person name="Fraser A."/>
            <person name="Hance Z."/>
            <person name="Hauser H."/>
            <person name="Holroyd S."/>
            <person name="Jagels K."/>
            <person name="Keith K.E."/>
            <person name="Maddison M."/>
            <person name="Moule S."/>
            <person name="Price C."/>
            <person name="Quail M.A."/>
            <person name="Rabbinowitsch E."/>
            <person name="Rutherford K."/>
            <person name="Sanders M."/>
            <person name="Simmonds M."/>
            <person name="Songsivilai S."/>
            <person name="Stevens K."/>
            <person name="Tumapa S."/>
            <person name="Vesaratchavest M."/>
            <person name="Whitehead S."/>
            <person name="Yeats C."/>
            <person name="Barrell B.G."/>
            <person name="Oyston P.C.F."/>
            <person name="Parkhill J."/>
        </authorList>
    </citation>
    <scope>NUCLEOTIDE SEQUENCE [LARGE SCALE GENOMIC DNA]</scope>
    <source>
        <strain>K96243</strain>
    </source>
</reference>
<keyword id="KW-0028">Amino-acid biosynthesis</keyword>
<keyword id="KW-0100">Branched-chain amino acid biosynthesis</keyword>
<keyword id="KW-0963">Cytoplasm</keyword>
<keyword id="KW-0432">Leucine biosynthesis</keyword>
<keyword id="KW-0460">Magnesium</keyword>
<keyword id="KW-0464">Manganese</keyword>
<keyword id="KW-0479">Metal-binding</keyword>
<keyword id="KW-0520">NAD</keyword>
<keyword id="KW-0560">Oxidoreductase</keyword>
<keyword id="KW-1185">Reference proteome</keyword>
<evidence type="ECO:0000255" key="1">
    <source>
        <dbReference type="HAMAP-Rule" id="MF_01033"/>
    </source>
</evidence>
<name>LEU3_BURPS</name>
<feature type="chain" id="PRO_0000083674" description="3-isopropylmalate dehydrogenase">
    <location>
        <begin position="1"/>
        <end position="355"/>
    </location>
</feature>
<feature type="binding site" evidence="1">
    <location>
        <position position="90"/>
    </location>
    <ligand>
        <name>substrate</name>
    </ligand>
</feature>
<feature type="binding site" evidence="1">
    <location>
        <position position="100"/>
    </location>
    <ligand>
        <name>substrate</name>
    </ligand>
</feature>
<feature type="binding site" evidence="1">
    <location>
        <position position="128"/>
    </location>
    <ligand>
        <name>substrate</name>
    </ligand>
</feature>
<feature type="binding site" evidence="1">
    <location>
        <position position="222"/>
    </location>
    <ligand>
        <name>Mg(2+)</name>
        <dbReference type="ChEBI" id="CHEBI:18420"/>
    </ligand>
</feature>
<feature type="binding site" evidence="1">
    <location>
        <position position="222"/>
    </location>
    <ligand>
        <name>substrate</name>
    </ligand>
</feature>
<feature type="binding site" evidence="1">
    <location>
        <position position="246"/>
    </location>
    <ligand>
        <name>Mg(2+)</name>
        <dbReference type="ChEBI" id="CHEBI:18420"/>
    </ligand>
</feature>
<feature type="binding site" evidence="1">
    <location>
        <position position="250"/>
    </location>
    <ligand>
        <name>Mg(2+)</name>
        <dbReference type="ChEBI" id="CHEBI:18420"/>
    </ligand>
</feature>
<feature type="binding site" evidence="1">
    <location>
        <begin position="280"/>
        <end position="292"/>
    </location>
    <ligand>
        <name>NAD(+)</name>
        <dbReference type="ChEBI" id="CHEBI:57540"/>
    </ligand>
</feature>
<feature type="site" description="Important for catalysis" evidence="1">
    <location>
        <position position="135"/>
    </location>
</feature>
<feature type="site" description="Important for catalysis" evidence="1">
    <location>
        <position position="190"/>
    </location>
</feature>
<gene>
    <name evidence="1" type="primary">leuB</name>
    <name type="ordered locus">BPSS1705</name>
</gene>
<dbReference type="EC" id="1.1.1.85" evidence="1"/>
<dbReference type="EMBL" id="BX571966">
    <property type="protein sequence ID" value="CAH39178.1"/>
    <property type="molecule type" value="Genomic_DNA"/>
</dbReference>
<dbReference type="RefSeq" id="WP_004187693.1">
    <property type="nucleotide sequence ID" value="NZ_CP009537.1"/>
</dbReference>
<dbReference type="RefSeq" id="YP_111710.1">
    <property type="nucleotide sequence ID" value="NC_006351.1"/>
</dbReference>
<dbReference type="SMR" id="Q63JL2"/>
<dbReference type="STRING" id="272560.BPSS1705"/>
<dbReference type="GeneID" id="93063903"/>
<dbReference type="KEGG" id="bps:BPSS1705"/>
<dbReference type="PATRIC" id="fig|272560.51.peg.5117"/>
<dbReference type="eggNOG" id="COG0473">
    <property type="taxonomic scope" value="Bacteria"/>
</dbReference>
<dbReference type="UniPathway" id="UPA00048">
    <property type="reaction ID" value="UER00072"/>
</dbReference>
<dbReference type="Proteomes" id="UP000000605">
    <property type="component" value="Chromosome 2"/>
</dbReference>
<dbReference type="GO" id="GO:0005829">
    <property type="term" value="C:cytosol"/>
    <property type="evidence" value="ECO:0007669"/>
    <property type="project" value="TreeGrafter"/>
</dbReference>
<dbReference type="GO" id="GO:0003862">
    <property type="term" value="F:3-isopropylmalate dehydrogenase activity"/>
    <property type="evidence" value="ECO:0007669"/>
    <property type="project" value="UniProtKB-UniRule"/>
</dbReference>
<dbReference type="GO" id="GO:0000287">
    <property type="term" value="F:magnesium ion binding"/>
    <property type="evidence" value="ECO:0007669"/>
    <property type="project" value="InterPro"/>
</dbReference>
<dbReference type="GO" id="GO:0051287">
    <property type="term" value="F:NAD binding"/>
    <property type="evidence" value="ECO:0007669"/>
    <property type="project" value="InterPro"/>
</dbReference>
<dbReference type="GO" id="GO:0009098">
    <property type="term" value="P:L-leucine biosynthetic process"/>
    <property type="evidence" value="ECO:0007669"/>
    <property type="project" value="UniProtKB-UniRule"/>
</dbReference>
<dbReference type="FunFam" id="3.40.718.10:FF:000028">
    <property type="entry name" value="3-isopropylmalate dehydrogenase"/>
    <property type="match status" value="1"/>
</dbReference>
<dbReference type="Gene3D" id="3.40.718.10">
    <property type="entry name" value="Isopropylmalate Dehydrogenase"/>
    <property type="match status" value="1"/>
</dbReference>
<dbReference type="HAMAP" id="MF_01033">
    <property type="entry name" value="LeuB_type1"/>
    <property type="match status" value="1"/>
</dbReference>
<dbReference type="InterPro" id="IPR019818">
    <property type="entry name" value="IsoCit/isopropylmalate_DH_CS"/>
</dbReference>
<dbReference type="InterPro" id="IPR024084">
    <property type="entry name" value="IsoPropMal-DH-like_dom"/>
</dbReference>
<dbReference type="InterPro" id="IPR004429">
    <property type="entry name" value="Isopropylmalate_DH"/>
</dbReference>
<dbReference type="NCBIfam" id="TIGR00169">
    <property type="entry name" value="leuB"/>
    <property type="match status" value="1"/>
</dbReference>
<dbReference type="PANTHER" id="PTHR42979">
    <property type="entry name" value="3-ISOPROPYLMALATE DEHYDROGENASE"/>
    <property type="match status" value="1"/>
</dbReference>
<dbReference type="PANTHER" id="PTHR42979:SF1">
    <property type="entry name" value="3-ISOPROPYLMALATE DEHYDROGENASE"/>
    <property type="match status" value="1"/>
</dbReference>
<dbReference type="Pfam" id="PF00180">
    <property type="entry name" value="Iso_dh"/>
    <property type="match status" value="1"/>
</dbReference>
<dbReference type="SMART" id="SM01329">
    <property type="entry name" value="Iso_dh"/>
    <property type="match status" value="1"/>
</dbReference>
<dbReference type="SUPFAM" id="SSF53659">
    <property type="entry name" value="Isocitrate/Isopropylmalate dehydrogenase-like"/>
    <property type="match status" value="1"/>
</dbReference>
<dbReference type="PROSITE" id="PS00470">
    <property type="entry name" value="IDH_IMDH"/>
    <property type="match status" value="1"/>
</dbReference>
<proteinExistence type="inferred from homology"/>
<comment type="function">
    <text evidence="1">Catalyzes the oxidation of 3-carboxy-2-hydroxy-4-methylpentanoate (3-isopropylmalate) to 3-carboxy-4-methyl-2-oxopentanoate. The product decarboxylates to 4-methyl-2 oxopentanoate.</text>
</comment>
<comment type="catalytic activity">
    <reaction evidence="1">
        <text>(2R,3S)-3-isopropylmalate + NAD(+) = 4-methyl-2-oxopentanoate + CO2 + NADH</text>
        <dbReference type="Rhea" id="RHEA:32271"/>
        <dbReference type="ChEBI" id="CHEBI:16526"/>
        <dbReference type="ChEBI" id="CHEBI:17865"/>
        <dbReference type="ChEBI" id="CHEBI:35121"/>
        <dbReference type="ChEBI" id="CHEBI:57540"/>
        <dbReference type="ChEBI" id="CHEBI:57945"/>
        <dbReference type="EC" id="1.1.1.85"/>
    </reaction>
</comment>
<comment type="cofactor">
    <cofactor evidence="1">
        <name>Mg(2+)</name>
        <dbReference type="ChEBI" id="CHEBI:18420"/>
    </cofactor>
    <cofactor evidence="1">
        <name>Mn(2+)</name>
        <dbReference type="ChEBI" id="CHEBI:29035"/>
    </cofactor>
    <text evidence="1">Binds 1 Mg(2+) or Mn(2+) ion per subunit.</text>
</comment>
<comment type="pathway">
    <text evidence="1">Amino-acid biosynthesis; L-leucine biosynthesis; L-leucine from 3-methyl-2-oxobutanoate: step 3/4.</text>
</comment>
<comment type="subunit">
    <text evidence="1">Homodimer.</text>
</comment>
<comment type="subcellular location">
    <subcellularLocation>
        <location evidence="1">Cytoplasm</location>
    </subcellularLocation>
</comment>
<comment type="similarity">
    <text evidence="1">Belongs to the isocitrate and isopropylmalate dehydrogenases family. LeuB type 1 subfamily.</text>
</comment>
<protein>
    <recommendedName>
        <fullName evidence="1">3-isopropylmalate dehydrogenase</fullName>
        <ecNumber evidence="1">1.1.1.85</ecNumber>
    </recommendedName>
    <alternativeName>
        <fullName evidence="1">3-IPM-DH</fullName>
    </alternativeName>
    <alternativeName>
        <fullName evidence="1">Beta-IPM dehydrogenase</fullName>
        <shortName evidence="1">IMDH</shortName>
    </alternativeName>
</protein>
<organism>
    <name type="scientific">Burkholderia pseudomallei (strain K96243)</name>
    <dbReference type="NCBI Taxonomy" id="272560"/>
    <lineage>
        <taxon>Bacteria</taxon>
        <taxon>Pseudomonadati</taxon>
        <taxon>Pseudomonadota</taxon>
        <taxon>Betaproteobacteria</taxon>
        <taxon>Burkholderiales</taxon>
        <taxon>Burkholderiaceae</taxon>
        <taxon>Burkholderia</taxon>
        <taxon>pseudomallei group</taxon>
    </lineage>
</organism>
<sequence>MKIAVLPGDGIGPEIVNEAVKVLNALDEKFELEQAPVGGAGYEASGHPLPDATLALAKEADAILFGAVGDWKYDSLERALRPEQAILGLRKHLELFANFRPAICYPQLVDASPLKPELVAGLDILIVRELNGDIYFGQPRGVRAAPDGPFAGAREGFDTMRYSEPEVRRIAHVAFQAARKRAKKLLSVDKSNVLETSQFWRDVMIDVSKEYADVELSHMYVDNAAMQLAKAPKQFDVIVTGNMFGDILSDEASMLTGSIGMLPSASLDQRNKGLYEPSHGSAPDIAGKGIANPLATILSAAMLLRYSLNRAEQADRIERAVKAVLEQGYRTGDIATPGCKQVGTAAMGDAVVAAL</sequence>
<accession>Q63JL2</accession>